<name>BGAL9_ORYSJ</name>
<keyword id="KW-0052">Apoplast</keyword>
<keyword id="KW-0326">Glycosidase</keyword>
<keyword id="KW-0378">Hydrolase</keyword>
<keyword id="KW-1185">Reference proteome</keyword>
<keyword id="KW-0964">Secreted</keyword>
<keyword id="KW-0732">Signal</keyword>
<proteinExistence type="evidence at transcript level"/>
<reference key="1">
    <citation type="journal article" date="2005" name="Nature">
        <title>The map-based sequence of the rice genome.</title>
        <authorList>
            <consortium name="International rice genome sequencing project (IRGSP)"/>
        </authorList>
    </citation>
    <scope>NUCLEOTIDE SEQUENCE [LARGE SCALE GENOMIC DNA]</scope>
    <source>
        <strain>cv. Nipponbare</strain>
    </source>
</reference>
<reference key="2">
    <citation type="journal article" date="2008" name="Nucleic Acids Res.">
        <title>The rice annotation project database (RAP-DB): 2008 update.</title>
        <authorList>
            <consortium name="The rice annotation project (RAP)"/>
        </authorList>
    </citation>
    <scope>GENOME REANNOTATION</scope>
    <source>
        <strain>cv. Nipponbare</strain>
    </source>
</reference>
<reference key="3">
    <citation type="journal article" date="2013" name="Rice">
        <title>Improvement of the Oryza sativa Nipponbare reference genome using next generation sequence and optical map data.</title>
        <authorList>
            <person name="Kawahara Y."/>
            <person name="de la Bastide M."/>
            <person name="Hamilton J.P."/>
            <person name="Kanamori H."/>
            <person name="McCombie W.R."/>
            <person name="Ouyang S."/>
            <person name="Schwartz D.C."/>
            <person name="Tanaka T."/>
            <person name="Wu J."/>
            <person name="Zhou S."/>
            <person name="Childs K.L."/>
            <person name="Davidson R.M."/>
            <person name="Lin H."/>
            <person name="Quesada-Ocampo L."/>
            <person name="Vaillancourt B."/>
            <person name="Sakai H."/>
            <person name="Lee S.S."/>
            <person name="Kim J."/>
            <person name="Numa H."/>
            <person name="Itoh T."/>
            <person name="Buell C.R."/>
            <person name="Matsumoto T."/>
        </authorList>
    </citation>
    <scope>GENOME REANNOTATION</scope>
    <source>
        <strain>cv. Nipponbare</strain>
    </source>
</reference>
<reference key="4">
    <citation type="journal article" date="2003" name="Science">
        <title>Collection, mapping, and annotation of over 28,000 cDNA clones from japonica rice.</title>
        <authorList>
            <consortium name="The rice full-length cDNA consortium"/>
        </authorList>
    </citation>
    <scope>NUCLEOTIDE SEQUENCE [LARGE SCALE MRNA]</scope>
    <source>
        <strain>cv. Nipponbare</strain>
    </source>
</reference>
<comment type="catalytic activity">
    <reaction>
        <text>Hydrolysis of terminal non-reducing beta-D-galactose residues in beta-D-galactosides.</text>
        <dbReference type="EC" id="3.2.1.23"/>
    </reaction>
</comment>
<comment type="subcellular location">
    <subcellularLocation>
        <location evidence="2">Secreted</location>
        <location evidence="2">Extracellular space</location>
        <location evidence="2">Apoplast</location>
    </subcellularLocation>
</comment>
<comment type="similarity">
    <text evidence="2">Belongs to the glycosyl hydrolase 35 family.</text>
</comment>
<feature type="signal peptide" evidence="1">
    <location>
        <begin position="1"/>
        <end position="20"/>
    </location>
</feature>
<feature type="chain" id="PRO_0000294161" description="Beta-galactosidase 9">
    <location>
        <begin position="21"/>
        <end position="715"/>
    </location>
</feature>
<feature type="active site" description="Proton donor" evidence="1">
    <location>
        <position position="178"/>
    </location>
</feature>
<feature type="active site" description="Nucleophile" evidence="1">
    <location>
        <position position="247"/>
    </location>
</feature>
<feature type="sequence conflict" description="In Ref. 4; AK102756." evidence="2" ref="4">
    <original>H</original>
    <variation>R</variation>
    <location>
        <position position="26"/>
    </location>
</feature>
<accession>Q5Z7L0</accession>
<accession>A0A0P0WY17</accession>
<evidence type="ECO:0000255" key="1"/>
<evidence type="ECO:0000305" key="2"/>
<organism>
    <name type="scientific">Oryza sativa subsp. japonica</name>
    <name type="common">Rice</name>
    <dbReference type="NCBI Taxonomy" id="39947"/>
    <lineage>
        <taxon>Eukaryota</taxon>
        <taxon>Viridiplantae</taxon>
        <taxon>Streptophyta</taxon>
        <taxon>Embryophyta</taxon>
        <taxon>Tracheophyta</taxon>
        <taxon>Spermatophyta</taxon>
        <taxon>Magnoliopsida</taxon>
        <taxon>Liliopsida</taxon>
        <taxon>Poales</taxon>
        <taxon>Poaceae</taxon>
        <taxon>BOP clade</taxon>
        <taxon>Oryzoideae</taxon>
        <taxon>Oryzeae</taxon>
        <taxon>Oryzinae</taxon>
        <taxon>Oryza</taxon>
        <taxon>Oryza sativa</taxon>
    </lineage>
</organism>
<gene>
    <name type="ordered locus">Os06g0573600</name>
    <name type="ordered locus">LOC_Os06g37560</name>
    <name type="ORF">OSJNBa0006A22.31-1</name>
</gene>
<dbReference type="EC" id="3.2.1.23"/>
<dbReference type="EMBL" id="AP004729">
    <property type="protein sequence ID" value="BAD61846.1"/>
    <property type="molecule type" value="Genomic_DNA"/>
</dbReference>
<dbReference type="EMBL" id="AP008212">
    <property type="protein sequence ID" value="BAF19834.1"/>
    <property type="molecule type" value="Genomic_DNA"/>
</dbReference>
<dbReference type="EMBL" id="AP014962">
    <property type="protein sequence ID" value="BAS98330.1"/>
    <property type="molecule type" value="Genomic_DNA"/>
</dbReference>
<dbReference type="EMBL" id="AK102756">
    <property type="status" value="NOT_ANNOTATED_CDS"/>
    <property type="molecule type" value="mRNA"/>
</dbReference>
<dbReference type="RefSeq" id="XP_015644212.1">
    <property type="nucleotide sequence ID" value="XM_015788726.1"/>
</dbReference>
<dbReference type="SMR" id="Q5Z7L0"/>
<dbReference type="FunCoup" id="Q5Z7L0">
    <property type="interactions" value="1"/>
</dbReference>
<dbReference type="STRING" id="39947.Q5Z7L0"/>
<dbReference type="CAZy" id="GH35">
    <property type="family name" value="Glycoside Hydrolase Family 35"/>
</dbReference>
<dbReference type="PaxDb" id="39947-Q5Z7L0"/>
<dbReference type="EnsemblPlants" id="Os06t0573600-01">
    <property type="protein sequence ID" value="Os06t0573600-01"/>
    <property type="gene ID" value="Os06g0573600"/>
</dbReference>
<dbReference type="Gramene" id="Os06t0573600-01">
    <property type="protein sequence ID" value="Os06t0573600-01"/>
    <property type="gene ID" value="Os06g0573600"/>
</dbReference>
<dbReference type="KEGG" id="dosa:Os06g0573600"/>
<dbReference type="eggNOG" id="KOG0496">
    <property type="taxonomic scope" value="Eukaryota"/>
</dbReference>
<dbReference type="HOGENOM" id="CLU_007853_4_2_1"/>
<dbReference type="InParanoid" id="Q5Z7L0"/>
<dbReference type="OMA" id="YETWNIG"/>
<dbReference type="OrthoDB" id="1657402at2759"/>
<dbReference type="Proteomes" id="UP000000763">
    <property type="component" value="Chromosome 6"/>
</dbReference>
<dbReference type="Proteomes" id="UP000059680">
    <property type="component" value="Chromosome 6"/>
</dbReference>
<dbReference type="ExpressionAtlas" id="Q5Z7L0">
    <property type="expression patterns" value="baseline and differential"/>
</dbReference>
<dbReference type="GO" id="GO:0048046">
    <property type="term" value="C:apoplast"/>
    <property type="evidence" value="ECO:0007669"/>
    <property type="project" value="UniProtKB-SubCell"/>
</dbReference>
<dbReference type="GO" id="GO:0009505">
    <property type="term" value="C:plant-type cell wall"/>
    <property type="evidence" value="ECO:0000318"/>
    <property type="project" value="GO_Central"/>
</dbReference>
<dbReference type="GO" id="GO:0005773">
    <property type="term" value="C:vacuole"/>
    <property type="evidence" value="ECO:0000318"/>
    <property type="project" value="GO_Central"/>
</dbReference>
<dbReference type="GO" id="GO:0004565">
    <property type="term" value="F:beta-galactosidase activity"/>
    <property type="evidence" value="ECO:0000318"/>
    <property type="project" value="GO_Central"/>
</dbReference>
<dbReference type="GO" id="GO:0019388">
    <property type="term" value="P:galactose catabolic process"/>
    <property type="evidence" value="ECO:0000318"/>
    <property type="project" value="GO_Central"/>
</dbReference>
<dbReference type="GO" id="GO:0009827">
    <property type="term" value="P:plant-type cell wall modification"/>
    <property type="evidence" value="ECO:0000318"/>
    <property type="project" value="GO_Central"/>
</dbReference>
<dbReference type="FunFam" id="2.60.120.260:FF:000061">
    <property type="entry name" value="Beta-galactosidase"/>
    <property type="match status" value="1"/>
</dbReference>
<dbReference type="FunFam" id="2.60.120.260:FF:000076">
    <property type="entry name" value="Beta-galactosidase"/>
    <property type="match status" value="1"/>
</dbReference>
<dbReference type="FunFam" id="2.60.120.260:FF:000142">
    <property type="entry name" value="Beta-galactosidase"/>
    <property type="match status" value="1"/>
</dbReference>
<dbReference type="FunFam" id="3.20.20.80:FF:000021">
    <property type="entry name" value="Beta-galactosidase"/>
    <property type="match status" value="1"/>
</dbReference>
<dbReference type="Gene3D" id="2.60.120.260">
    <property type="entry name" value="Galactose-binding domain-like"/>
    <property type="match status" value="2"/>
</dbReference>
<dbReference type="Gene3D" id="3.20.20.80">
    <property type="entry name" value="Glycosidases"/>
    <property type="match status" value="1"/>
</dbReference>
<dbReference type="InterPro" id="IPR048913">
    <property type="entry name" value="BetaGal_gal-bd"/>
</dbReference>
<dbReference type="InterPro" id="IPR008979">
    <property type="entry name" value="Galactose-bd-like_sf"/>
</dbReference>
<dbReference type="InterPro" id="IPR041392">
    <property type="entry name" value="GHD"/>
</dbReference>
<dbReference type="InterPro" id="IPR031330">
    <property type="entry name" value="Gly_Hdrlase_35_cat"/>
</dbReference>
<dbReference type="InterPro" id="IPR019801">
    <property type="entry name" value="Glyco_hydro_35_CS"/>
</dbReference>
<dbReference type="InterPro" id="IPR001944">
    <property type="entry name" value="Glycoside_Hdrlase_35"/>
</dbReference>
<dbReference type="InterPro" id="IPR017853">
    <property type="entry name" value="Glycoside_hydrolase_SF"/>
</dbReference>
<dbReference type="PANTHER" id="PTHR23421">
    <property type="entry name" value="BETA-GALACTOSIDASE RELATED"/>
    <property type="match status" value="1"/>
</dbReference>
<dbReference type="Pfam" id="PF21467">
    <property type="entry name" value="BetaGal_gal-bd"/>
    <property type="match status" value="2"/>
</dbReference>
<dbReference type="Pfam" id="PF17834">
    <property type="entry name" value="GHD"/>
    <property type="match status" value="1"/>
</dbReference>
<dbReference type="Pfam" id="PF01301">
    <property type="entry name" value="Glyco_hydro_35"/>
    <property type="match status" value="1"/>
</dbReference>
<dbReference type="PRINTS" id="PR00742">
    <property type="entry name" value="GLHYDRLASE35"/>
</dbReference>
<dbReference type="SUPFAM" id="SSF51445">
    <property type="entry name" value="(Trans)glycosidases"/>
    <property type="match status" value="1"/>
</dbReference>
<dbReference type="SUPFAM" id="SSF49785">
    <property type="entry name" value="Galactose-binding domain-like"/>
    <property type="match status" value="2"/>
</dbReference>
<dbReference type="PROSITE" id="PS01182">
    <property type="entry name" value="GLYCOSYL_HYDROL_F35"/>
    <property type="match status" value="1"/>
</dbReference>
<protein>
    <recommendedName>
        <fullName>Beta-galactosidase 9</fullName>
        <shortName>Lactase 9</shortName>
        <ecNumber>3.2.1.23</ecNumber>
    </recommendedName>
</protein>
<sequence>MSGGAVAFLLLVAAAAVANAAVTYDHRSLTINGQRRILISGSIHYPRSTPEMWPDLIQKAKDGGLDVIQTYVFWNGHEPVQGQYYFSDRYDLVRFVKLVKQAGLYVNLRIGPYVCAEWNYGGFPVWLKYVPGISFRTDNGPFKAAMQTFVEKIVSMMKSEGLFEWQGGPIILAQVENEYGPMESVMGSGAKSYVDWAAKMAVATNAGVPWIMCKQDDAPDPVINTCNGFYCDDFTPNSKNKPSMWTEAWSGWFTAFGGTVPQRPVEDLAFAVARFIQKGGSFINYYMYHGGTNFDRTAGGPFIATSYDYDAPIDEYGLLRQPKWGHLTNLHKAIKQAETALVAGDPTVQNIGNYEKAYVFRSSSGDCAAFLSNFHTSAAARVAFNGRRYDLPAWSISVLPDCRTAVYNTATVTAASSPAKMNPAGGFTWQSYGEATNSLDETAFTKDGLVEQLSMTWDKSDYLWYTTYVNIDSGEQFLKSGQWPQLTVYSAGHSVQVFVNGQYFGNAYGGYDGPKLTYSGYVKMWQGSNKISILSSAVGLPNVGTHYETWNIGVLGPVTLSGLNEGKRDLSKQKWTYQIGLKGEKLGVHSVSGSSSVEWGGAAGKQPVTWHRAYFNAPAGGAPVALDLGSMGKGQAWVNGHLIGRYWSYKASGNCGGCSYAGTYSEKKCQANCGDASQRWYHVPRSWLNPSGNLVVLLEEFGGDLSGVTLMTRTT</sequence>